<reference key="1">
    <citation type="submission" date="2007-05" db="EMBL/GenBank/DDBJ databases">
        <title>Complete sequence of chromosome of Staphylococcus aureus subsp. aureus JH9.</title>
        <authorList>
            <consortium name="US DOE Joint Genome Institute"/>
            <person name="Copeland A."/>
            <person name="Lucas S."/>
            <person name="Lapidus A."/>
            <person name="Barry K."/>
            <person name="Detter J.C."/>
            <person name="Glavina del Rio T."/>
            <person name="Hammon N."/>
            <person name="Israni S."/>
            <person name="Pitluck S."/>
            <person name="Chain P."/>
            <person name="Malfatti S."/>
            <person name="Shin M."/>
            <person name="Vergez L."/>
            <person name="Schmutz J."/>
            <person name="Larimer F."/>
            <person name="Land M."/>
            <person name="Hauser L."/>
            <person name="Kyrpides N."/>
            <person name="Kim E."/>
            <person name="Tomasz A."/>
            <person name="Richardson P."/>
        </authorList>
    </citation>
    <scope>NUCLEOTIDE SEQUENCE [LARGE SCALE GENOMIC DNA]</scope>
    <source>
        <strain>JH9</strain>
    </source>
</reference>
<proteinExistence type="inferred from homology"/>
<sequence length="876" mass="101724">MEMKPKYDPREVEAGRYEEWVKNGYFKPSEDKSKETYTIVIPPPNVTGKLHLGHAWDTTLQDIITRMKRMQGYDTLYLPGMDHAGIATQAKVEAKLNEQGITRYDLGREKFLEQAWDWKEEYASFIRAQWAKLGLGLDYSRERFTLDEGLSKAVKKVFVDLYNKGIIYRGERIINWDPKARTALSDIEVIHEDVQGAFYHFKYPYADGEGFIEIATTRPETMLGDTAIVVNPNDERYKDVIGKTVILPIVGRELPILADEYVDIDFGSGAMKVTPAHDPNDFEIGQRHQLENIIVMDENGKMNDKAGKYEGMDRFDCRKQLVKDLKEQDLVIKIEDHVHSVGHSERSGAVVEPYLSTQWFVRMEDLAKRSLDNQKTDDRIDFYPQRFEHTFNQWMENIRDWTISRQLWWGHQIPAWYHKETGEIYVGEEAPTDIENWQQDEDVLDTWFSSALWPFSTLGWPDLESEDFKRYYPTNALVTGYDIIFFWVARMIFQGLEFTDRRPFNDVLLHGLVRAEDGRKMSKSLGNGVDPMDVIDEYGADSLRYFLATGSSPGHDLRYSTEKVESVWNFINKIWNGARFSLMNIGEDFKVEDIDLSGNLSLADKWILTRLNETIATVTDLSDKYEFGEVGRALYNFIWDDFCDWYIEMSKIPMNSNDEEQKQVTRSVLSYTLDNIMRMLHPFMPFVTEKIWQSLPHEGDTIVKASWPEVRESLIFEESKQTMQQLVEIIKSVRQSRVEVNTPLSKEIPILIQAKDKEIETTLSQNKDYLIKFCNPSTLNISTDVEIPEKAMTSVVIAGKVVLPLEGLIDMDKEISRLEKELAKLQSELDRVDKKLSNENFVSKAPEKVINEEKRKKQDYQEKYDGVKARIEQLKA</sequence>
<feature type="chain" id="PRO_1000088566" description="Valine--tRNA ligase">
    <location>
        <begin position="1"/>
        <end position="876"/>
    </location>
</feature>
<feature type="coiled-coil region" evidence="1">
    <location>
        <begin position="805"/>
        <end position="876"/>
    </location>
</feature>
<feature type="short sequence motif" description="'HIGH' region">
    <location>
        <begin position="44"/>
        <end position="54"/>
    </location>
</feature>
<feature type="short sequence motif" description="'KMSKS' region">
    <location>
        <begin position="520"/>
        <end position="524"/>
    </location>
</feature>
<feature type="binding site" evidence="1">
    <location>
        <position position="523"/>
    </location>
    <ligand>
        <name>ATP</name>
        <dbReference type="ChEBI" id="CHEBI:30616"/>
    </ligand>
</feature>
<organism>
    <name type="scientific">Staphylococcus aureus (strain JH9)</name>
    <dbReference type="NCBI Taxonomy" id="359786"/>
    <lineage>
        <taxon>Bacteria</taxon>
        <taxon>Bacillati</taxon>
        <taxon>Bacillota</taxon>
        <taxon>Bacilli</taxon>
        <taxon>Bacillales</taxon>
        <taxon>Staphylococcaceae</taxon>
        <taxon>Staphylococcus</taxon>
    </lineage>
</organism>
<dbReference type="EC" id="6.1.1.9" evidence="1"/>
<dbReference type="EMBL" id="CP000703">
    <property type="protein sequence ID" value="ABQ49511.1"/>
    <property type="molecule type" value="Genomic_DNA"/>
</dbReference>
<dbReference type="RefSeq" id="WP_000425353.1">
    <property type="nucleotide sequence ID" value="NC_009487.1"/>
</dbReference>
<dbReference type="SMR" id="A5ITI8"/>
<dbReference type="KEGG" id="saj:SaurJH9_1721"/>
<dbReference type="HOGENOM" id="CLU_001493_0_2_9"/>
<dbReference type="GO" id="GO:0005829">
    <property type="term" value="C:cytosol"/>
    <property type="evidence" value="ECO:0007669"/>
    <property type="project" value="TreeGrafter"/>
</dbReference>
<dbReference type="GO" id="GO:0002161">
    <property type="term" value="F:aminoacyl-tRNA deacylase activity"/>
    <property type="evidence" value="ECO:0007669"/>
    <property type="project" value="InterPro"/>
</dbReference>
<dbReference type="GO" id="GO:0005524">
    <property type="term" value="F:ATP binding"/>
    <property type="evidence" value="ECO:0007669"/>
    <property type="project" value="UniProtKB-UniRule"/>
</dbReference>
<dbReference type="GO" id="GO:0004832">
    <property type="term" value="F:valine-tRNA ligase activity"/>
    <property type="evidence" value="ECO:0007669"/>
    <property type="project" value="UniProtKB-UniRule"/>
</dbReference>
<dbReference type="GO" id="GO:0006438">
    <property type="term" value="P:valyl-tRNA aminoacylation"/>
    <property type="evidence" value="ECO:0007669"/>
    <property type="project" value="UniProtKB-UniRule"/>
</dbReference>
<dbReference type="CDD" id="cd07962">
    <property type="entry name" value="Anticodon_Ia_Val"/>
    <property type="match status" value="1"/>
</dbReference>
<dbReference type="CDD" id="cd00817">
    <property type="entry name" value="ValRS_core"/>
    <property type="match status" value="1"/>
</dbReference>
<dbReference type="FunFam" id="1.10.287.380:FF:000001">
    <property type="entry name" value="Valine--tRNA ligase"/>
    <property type="match status" value="1"/>
</dbReference>
<dbReference type="FunFam" id="1.10.730.10:FF:000014">
    <property type="entry name" value="Valine--tRNA ligase"/>
    <property type="match status" value="1"/>
</dbReference>
<dbReference type="FunFam" id="3.40.50.620:FF:000032">
    <property type="entry name" value="Valine--tRNA ligase"/>
    <property type="match status" value="1"/>
</dbReference>
<dbReference type="FunFam" id="3.40.50.620:FF:000098">
    <property type="entry name" value="Valine--tRNA ligase"/>
    <property type="match status" value="1"/>
</dbReference>
<dbReference type="FunFam" id="3.90.740.10:FF:000005">
    <property type="entry name" value="Valine--tRNA ligase, mitochondrial"/>
    <property type="match status" value="1"/>
</dbReference>
<dbReference type="Gene3D" id="3.40.50.620">
    <property type="entry name" value="HUPs"/>
    <property type="match status" value="2"/>
</dbReference>
<dbReference type="Gene3D" id="1.10.730.10">
    <property type="entry name" value="Isoleucyl-tRNA Synthetase, Domain 1"/>
    <property type="match status" value="1"/>
</dbReference>
<dbReference type="Gene3D" id="1.10.287.380">
    <property type="entry name" value="Valyl-tRNA synthetase, C-terminal domain"/>
    <property type="match status" value="1"/>
</dbReference>
<dbReference type="Gene3D" id="3.90.740.10">
    <property type="entry name" value="Valyl/Leucyl/Isoleucyl-tRNA synthetase, editing domain"/>
    <property type="match status" value="1"/>
</dbReference>
<dbReference type="HAMAP" id="MF_02004">
    <property type="entry name" value="Val_tRNA_synth_type1"/>
    <property type="match status" value="1"/>
</dbReference>
<dbReference type="InterPro" id="IPR001412">
    <property type="entry name" value="aa-tRNA-synth_I_CS"/>
</dbReference>
<dbReference type="InterPro" id="IPR002300">
    <property type="entry name" value="aa-tRNA-synth_Ia"/>
</dbReference>
<dbReference type="InterPro" id="IPR033705">
    <property type="entry name" value="Anticodon_Ia_Val"/>
</dbReference>
<dbReference type="InterPro" id="IPR013155">
    <property type="entry name" value="M/V/L/I-tRNA-synth_anticd-bd"/>
</dbReference>
<dbReference type="InterPro" id="IPR014729">
    <property type="entry name" value="Rossmann-like_a/b/a_fold"/>
</dbReference>
<dbReference type="InterPro" id="IPR010978">
    <property type="entry name" value="tRNA-bd_arm"/>
</dbReference>
<dbReference type="InterPro" id="IPR009080">
    <property type="entry name" value="tRNAsynth_Ia_anticodon-bd"/>
</dbReference>
<dbReference type="InterPro" id="IPR037118">
    <property type="entry name" value="Val-tRNA_synth_C_sf"/>
</dbReference>
<dbReference type="InterPro" id="IPR019499">
    <property type="entry name" value="Val-tRNA_synth_tRNA-bd"/>
</dbReference>
<dbReference type="InterPro" id="IPR009008">
    <property type="entry name" value="Val/Leu/Ile-tRNA-synth_edit"/>
</dbReference>
<dbReference type="InterPro" id="IPR002303">
    <property type="entry name" value="Valyl-tRNA_ligase"/>
</dbReference>
<dbReference type="NCBIfam" id="NF004349">
    <property type="entry name" value="PRK05729.1"/>
    <property type="match status" value="1"/>
</dbReference>
<dbReference type="NCBIfam" id="TIGR00422">
    <property type="entry name" value="valS"/>
    <property type="match status" value="1"/>
</dbReference>
<dbReference type="PANTHER" id="PTHR11946:SF93">
    <property type="entry name" value="VALINE--TRNA LIGASE, CHLOROPLASTIC_MITOCHONDRIAL 2"/>
    <property type="match status" value="1"/>
</dbReference>
<dbReference type="PANTHER" id="PTHR11946">
    <property type="entry name" value="VALYL-TRNA SYNTHETASES"/>
    <property type="match status" value="1"/>
</dbReference>
<dbReference type="Pfam" id="PF08264">
    <property type="entry name" value="Anticodon_1"/>
    <property type="match status" value="1"/>
</dbReference>
<dbReference type="Pfam" id="PF00133">
    <property type="entry name" value="tRNA-synt_1"/>
    <property type="match status" value="1"/>
</dbReference>
<dbReference type="Pfam" id="PF10458">
    <property type="entry name" value="Val_tRNA-synt_C"/>
    <property type="match status" value="1"/>
</dbReference>
<dbReference type="PRINTS" id="PR00986">
    <property type="entry name" value="TRNASYNTHVAL"/>
</dbReference>
<dbReference type="SUPFAM" id="SSF47323">
    <property type="entry name" value="Anticodon-binding domain of a subclass of class I aminoacyl-tRNA synthetases"/>
    <property type="match status" value="1"/>
</dbReference>
<dbReference type="SUPFAM" id="SSF52374">
    <property type="entry name" value="Nucleotidylyl transferase"/>
    <property type="match status" value="1"/>
</dbReference>
<dbReference type="SUPFAM" id="SSF46589">
    <property type="entry name" value="tRNA-binding arm"/>
    <property type="match status" value="1"/>
</dbReference>
<dbReference type="SUPFAM" id="SSF50677">
    <property type="entry name" value="ValRS/IleRS/LeuRS editing domain"/>
    <property type="match status" value="1"/>
</dbReference>
<dbReference type="PROSITE" id="PS00178">
    <property type="entry name" value="AA_TRNA_LIGASE_I"/>
    <property type="match status" value="1"/>
</dbReference>
<gene>
    <name evidence="1" type="primary">valS</name>
    <name type="ordered locus">SaurJH9_1721</name>
</gene>
<accession>A5ITI8</accession>
<name>SYV_STAA9</name>
<comment type="function">
    <text evidence="1">Catalyzes the attachment of valine to tRNA(Val). As ValRS can inadvertently accommodate and process structurally similar amino acids such as threonine, to avoid such errors, it has a 'posttransfer' editing activity that hydrolyzes mischarged Thr-tRNA(Val) in a tRNA-dependent manner.</text>
</comment>
<comment type="catalytic activity">
    <reaction evidence="1">
        <text>tRNA(Val) + L-valine + ATP = L-valyl-tRNA(Val) + AMP + diphosphate</text>
        <dbReference type="Rhea" id="RHEA:10704"/>
        <dbReference type="Rhea" id="RHEA-COMP:9672"/>
        <dbReference type="Rhea" id="RHEA-COMP:9708"/>
        <dbReference type="ChEBI" id="CHEBI:30616"/>
        <dbReference type="ChEBI" id="CHEBI:33019"/>
        <dbReference type="ChEBI" id="CHEBI:57762"/>
        <dbReference type="ChEBI" id="CHEBI:78442"/>
        <dbReference type="ChEBI" id="CHEBI:78537"/>
        <dbReference type="ChEBI" id="CHEBI:456215"/>
        <dbReference type="EC" id="6.1.1.9"/>
    </reaction>
</comment>
<comment type="subunit">
    <text evidence="1">Monomer.</text>
</comment>
<comment type="subcellular location">
    <subcellularLocation>
        <location evidence="1">Cytoplasm</location>
    </subcellularLocation>
</comment>
<comment type="domain">
    <text evidence="1">ValRS has two distinct active sites: one for aminoacylation and one for editing. The misactivated threonine is translocated from the active site to the editing site.</text>
</comment>
<comment type="domain">
    <text evidence="1">The C-terminal coiled-coil domain is crucial for aminoacylation activity.</text>
</comment>
<comment type="similarity">
    <text evidence="1">Belongs to the class-I aminoacyl-tRNA synthetase family. ValS type 1 subfamily.</text>
</comment>
<protein>
    <recommendedName>
        <fullName evidence="1">Valine--tRNA ligase</fullName>
        <ecNumber evidence="1">6.1.1.9</ecNumber>
    </recommendedName>
    <alternativeName>
        <fullName evidence="1">Valyl-tRNA synthetase</fullName>
        <shortName evidence="1">ValRS</shortName>
    </alternativeName>
</protein>
<evidence type="ECO:0000255" key="1">
    <source>
        <dbReference type="HAMAP-Rule" id="MF_02004"/>
    </source>
</evidence>
<keyword id="KW-0030">Aminoacyl-tRNA synthetase</keyword>
<keyword id="KW-0067">ATP-binding</keyword>
<keyword id="KW-0175">Coiled coil</keyword>
<keyword id="KW-0963">Cytoplasm</keyword>
<keyword id="KW-0436">Ligase</keyword>
<keyword id="KW-0547">Nucleotide-binding</keyword>
<keyword id="KW-0648">Protein biosynthesis</keyword>